<dbReference type="EMBL" id="DQ221250">
    <property type="protein sequence ID" value="ABB29442.1"/>
    <property type="molecule type" value="Genomic_DNA"/>
</dbReference>
<dbReference type="SMR" id="Q2XVR6"/>
<dbReference type="FunCoup" id="Q2XVR6">
    <property type="interactions" value="77"/>
</dbReference>
<dbReference type="STRING" id="31033.ENSTRUP00000064171"/>
<dbReference type="GlyCosmos" id="Q2XVR6">
    <property type="glycosylation" value="5 sites, No reported glycans"/>
</dbReference>
<dbReference type="eggNOG" id="KOG2301">
    <property type="taxonomic scope" value="Eukaryota"/>
</dbReference>
<dbReference type="InParanoid" id="Q2XVR6"/>
<dbReference type="OrthoDB" id="2984333at2759"/>
<dbReference type="Proteomes" id="UP000005226">
    <property type="component" value="Unplaced"/>
</dbReference>
<dbReference type="GO" id="GO:0001518">
    <property type="term" value="C:voltage-gated sodium channel complex"/>
    <property type="evidence" value="ECO:0007669"/>
    <property type="project" value="InterPro"/>
</dbReference>
<dbReference type="GO" id="GO:0005248">
    <property type="term" value="F:voltage-gated sodium channel activity"/>
    <property type="evidence" value="ECO:0007669"/>
    <property type="project" value="InterPro"/>
</dbReference>
<dbReference type="GO" id="GO:0086010">
    <property type="term" value="P:membrane depolarization during action potential"/>
    <property type="evidence" value="ECO:0007669"/>
    <property type="project" value="TreeGrafter"/>
</dbReference>
<dbReference type="GO" id="GO:0019228">
    <property type="term" value="P:neuronal action potential"/>
    <property type="evidence" value="ECO:0007669"/>
    <property type="project" value="TreeGrafter"/>
</dbReference>
<dbReference type="CDD" id="cd13433">
    <property type="entry name" value="Na_channel_gate"/>
    <property type="match status" value="1"/>
</dbReference>
<dbReference type="FunFam" id="1.10.238.10:FF:000002">
    <property type="entry name" value="Sodium channel protein"/>
    <property type="match status" value="1"/>
</dbReference>
<dbReference type="FunFam" id="1.10.287.70:FF:000001">
    <property type="entry name" value="Sodium channel protein"/>
    <property type="match status" value="1"/>
</dbReference>
<dbReference type="FunFam" id="1.20.120.350:FF:000002">
    <property type="entry name" value="Sodium channel protein"/>
    <property type="match status" value="1"/>
</dbReference>
<dbReference type="FunFam" id="1.20.120.350:FF:000004">
    <property type="entry name" value="Sodium channel protein"/>
    <property type="match status" value="1"/>
</dbReference>
<dbReference type="FunFam" id="1.20.120.350:FF:000005">
    <property type="entry name" value="Sodium channel protein"/>
    <property type="match status" value="1"/>
</dbReference>
<dbReference type="FunFam" id="1.20.120.350:FF:000003">
    <property type="entry name" value="Voltage-dependent sodium channel"/>
    <property type="match status" value="1"/>
</dbReference>
<dbReference type="FunFam" id="1.10.287.70:FF:000049">
    <property type="entry name" value="Voltage-dependent sodium channel 2"/>
    <property type="match status" value="1"/>
</dbReference>
<dbReference type="Gene3D" id="1.10.287.70">
    <property type="match status" value="4"/>
</dbReference>
<dbReference type="Gene3D" id="1.10.238.10">
    <property type="entry name" value="EF-hand"/>
    <property type="match status" value="1"/>
</dbReference>
<dbReference type="Gene3D" id="1.20.5.1190">
    <property type="entry name" value="iswi atpase"/>
    <property type="match status" value="1"/>
</dbReference>
<dbReference type="Gene3D" id="1.20.120.350">
    <property type="entry name" value="Voltage-gated potassium channels. Chain C"/>
    <property type="match status" value="4"/>
</dbReference>
<dbReference type="InterPro" id="IPR005821">
    <property type="entry name" value="Ion_trans_dom"/>
</dbReference>
<dbReference type="InterPro" id="IPR001696">
    <property type="entry name" value="Na_channel_asu"/>
</dbReference>
<dbReference type="InterPro" id="IPR044564">
    <property type="entry name" value="Na_chnl_inactivation_gate"/>
</dbReference>
<dbReference type="InterPro" id="IPR010526">
    <property type="entry name" value="Na_trans_assoc_dom"/>
</dbReference>
<dbReference type="InterPro" id="IPR043203">
    <property type="entry name" value="VGCC_Ca_Na"/>
</dbReference>
<dbReference type="InterPro" id="IPR027359">
    <property type="entry name" value="Volt_channel_dom_sf"/>
</dbReference>
<dbReference type="PANTHER" id="PTHR10037:SF223">
    <property type="entry name" value="SODIUM CHANNEL PROTEIN TYPE 4 SUBUNIT ALPHA"/>
    <property type="match status" value="1"/>
</dbReference>
<dbReference type="PANTHER" id="PTHR10037">
    <property type="entry name" value="VOLTAGE-GATED CATION CHANNEL CALCIUM AND SODIUM"/>
    <property type="match status" value="1"/>
</dbReference>
<dbReference type="Pfam" id="PF00520">
    <property type="entry name" value="Ion_trans"/>
    <property type="match status" value="4"/>
</dbReference>
<dbReference type="Pfam" id="PF24609">
    <property type="entry name" value="IQ_SCN5A_C"/>
    <property type="match status" value="1"/>
</dbReference>
<dbReference type="Pfam" id="PF06512">
    <property type="entry name" value="Na_trans_assoc"/>
    <property type="match status" value="1"/>
</dbReference>
<dbReference type="PRINTS" id="PR00170">
    <property type="entry name" value="NACHANNEL"/>
</dbReference>
<dbReference type="SUPFAM" id="SSF81324">
    <property type="entry name" value="Voltage-gated potassium channels"/>
    <property type="match status" value="4"/>
</dbReference>
<reference key="1">
    <citation type="journal article" date="2005" name="Curr. Biol.">
        <title>Genetic basis of tetrodotoxin resistance in pufferfishes.</title>
        <authorList>
            <person name="Venkatesh B."/>
            <person name="Lu S.Q."/>
            <person name="Dandona N."/>
            <person name="See S.L."/>
            <person name="Brenner S."/>
            <person name="Soong T.W."/>
        </authorList>
    </citation>
    <scope>NUCLEOTIDE SEQUENCE [GENOMIC DNA]</scope>
</reference>
<accession>Q2XVR6</accession>
<sequence length="1719" mass="196480">MRTLLPPVGSEVFRRFTQSSLNEIQQKQQIREEERKRTNAQVSEELPEPASDLEAGKPLPFIYGEPPHELLNVPLEDIDPFYQSQKTFIVLSKGNIIYRFNAESSLYLLSPFNALRIVAIKILIHSLFSLFIMATILTNCAFMTLSDPPAWSKTMEYVFTFIYTFEATIKILSRGFCVGKFTFLKDPWNWLDFMVISMAYLTELVDLGNVSVLRTFRVLRALKTITVIPGLKTIVGALIQSVRKLADAMVLTVFCLSVFALIGLQLFMGNLRQKCVLIPQWLYGNLTFDINSTNGYYGNDTHDNGTKSKHLEFEFERHINNPDNYYYLTGQGDPLLCGNSSDAGVCPESYVCLKVGANPNYGYTSYDSFGWAFLALFRLMTQDFWENLFQLTLRTAGKTYMIFFVVVIFLGSFYLINLILAVVAMAYAEQNEATLAEAKEKEEEYIHILEALKKREEEQAARKEPHSTVEGFEDDHRLCPPCWYAFANIFLKWDCCGCWRHLKECLYAIVMDPFVDLGITICIILNTVFMAMEHYPMSADFEELLSVGNLVFTGIFTGEMVFKILAMDPYFYFQVGWNIFDSIIVTISLVELGLANVQGLSVLRSFRLMRVFKLAKSWPTLNMLIKIIGNSVGALGNLTLVLAIIVFIFAVVGMQLFGKNYKDCVCRISEDCVLPRWHMNDFFHAFLIIFRVLCGEWIESMWDCMEVSGQTMCLIVFMMVLVIGNLVVLNLFLALLLSSFSGDNLTTQDDEGENNLQIAINRINRAMSWTKTYILLYVYTLTESNLNQHFAVSDDEEQRRVKDILALTSVSSDKLVSHHCGNDFFRVPIAEAESDSDDSDYDEDKDSQCDESSVCSSVQKPEVQEEEMDENCVAKTPTDCWTKKCYSRCPFLDIDTSQGRGKIWCNIRRTCFSIVENNYFESFIVFMILLSSGALAFEDIYLEKHQLIKSILEYADKVFTYVFVMEMVLKWFAYGFKSYFSNAWCWLDFLIVDVSLVSLTANILGYSELGAIKSLRTLRALRPLRALSRFEGMRVVVNALVGAVPSIFNVLLVCLIFWLIFSIMGVNLFAGKFSYCFNETSQEIIDTKVVDNKTECIALIKANFTEVRWKNVKVNYDNVGIGYLSLLQVATFKGWTDIMYAAVDSRDVESQPIYEVNLYMYLYFVIFIIFGSFFTLNLFIGVIIDNFNQQKAKLGGQDIFMTEEQKKYYNAMKKLGSKKPQKPVPRPENPFQGLVFDLVTKQIFDVFIMVLICLNMVTMMVETDEQSDKKEEVLYWINVVFILIFTTECTLKIIALRRHYFSIGWNIFDFVVVILSILGLLLADIIEKYFVSPTLFRVIRLARIGRVLRLIRGAKGIRTLLFALMMSLPALFNIGLLLFLIMFIFSIFGMSNFAYVKKEALIDDMFNFETFGNSMICLFMITTSAGWDGLLSPIMNTPPDCDPNVENPGTTVRGNCGSPAIGIAFFSTYIIMSFLVVVNMFIAIILENFNVATEESSDPLCEDDFEMFYETWEKFDPDASQFIQYSKLSDFCDTLKEPLRIPQPNTIKLISMDLPLVPGDRIHCMDILLALTAEVLGDSDEMDTLKATMEEKFMANNPSKVSYEPISSTLLRKEEEVAATVIQRAYRKYLLLRTVRLASFMYREKTEGRGKEKAPETTGLLCKQFSQLYGFNKETDEPLQSKANRLGQVELQSEVLLHAVPPLRSSEFLQERDQRETSV</sequence>
<feature type="chain" id="PRO_0000371320" description="Sodium channel protein type 4 subunit alpha B">
    <location>
        <begin position="1"/>
        <end position="1719"/>
    </location>
</feature>
<feature type="topological domain" description="Cytoplasmic" evidence="5">
    <location>
        <begin position="1"/>
        <end position="126"/>
    </location>
</feature>
<feature type="transmembrane region" description="Helical; Name=S1 of repeat I" evidence="2">
    <location>
        <begin position="127"/>
        <end position="145"/>
    </location>
</feature>
<feature type="topological domain" description="Extracellular" evidence="5">
    <location>
        <begin position="146"/>
        <end position="152"/>
    </location>
</feature>
<feature type="transmembrane region" description="Helical; Name=S2 of repeat I" evidence="2">
    <location>
        <begin position="153"/>
        <end position="173"/>
    </location>
</feature>
<feature type="topological domain" description="Cytoplasmic" evidence="5">
    <location>
        <begin position="174"/>
        <end position="187"/>
    </location>
</feature>
<feature type="transmembrane region" description="Helical; Name=S3 of repeat I" evidence="2">
    <location>
        <begin position="188"/>
        <end position="205"/>
    </location>
</feature>
<feature type="topological domain" description="Extracellular" evidence="5">
    <location>
        <begin position="206"/>
        <end position="211"/>
    </location>
</feature>
<feature type="transmembrane region" description="Helical; Name=S4 of repeat I" evidence="2">
    <location>
        <begin position="212"/>
        <end position="228"/>
    </location>
</feature>
<feature type="topological domain" description="Cytoplasmic" evidence="5">
    <location>
        <begin position="229"/>
        <end position="247"/>
    </location>
</feature>
<feature type="transmembrane region" description="Helical; Name=S5 of repeat I" evidence="2">
    <location>
        <begin position="248"/>
        <end position="267"/>
    </location>
</feature>
<feature type="topological domain" description="Extracellular" evidence="5">
    <location>
        <begin position="268"/>
        <end position="368"/>
    </location>
</feature>
<feature type="intramembrane region" description="Pore-forming" evidence="2">
    <location>
        <begin position="369"/>
        <end position="393"/>
    </location>
</feature>
<feature type="topological domain" description="Extracellular" evidence="5">
    <location>
        <begin position="394"/>
        <end position="400"/>
    </location>
</feature>
<feature type="transmembrane region" description="Helical; Name=S6 of repeat I" evidence="2">
    <location>
        <begin position="401"/>
        <end position="421"/>
    </location>
</feature>
<feature type="topological domain" description="Cytoplasmic" evidence="5">
    <location>
        <begin position="422"/>
        <end position="513"/>
    </location>
</feature>
<feature type="transmembrane region" description="Helical; Name=S1 of repeat II" evidence="2">
    <location>
        <begin position="514"/>
        <end position="532"/>
    </location>
</feature>
<feature type="topological domain" description="Extracellular" evidence="5">
    <location>
        <begin position="533"/>
        <end position="543"/>
    </location>
</feature>
<feature type="transmembrane region" description="Helical; Name=S2 of repeat II" evidence="2">
    <location>
        <begin position="544"/>
        <end position="563"/>
    </location>
</feature>
<feature type="topological domain" description="Cytoplasmic" evidence="5">
    <location>
        <begin position="564"/>
        <end position="577"/>
    </location>
</feature>
<feature type="transmembrane region" description="Helical; Name=S3 of repeat II" evidence="2">
    <location>
        <begin position="578"/>
        <end position="597"/>
    </location>
</feature>
<feature type="topological domain" description="Extracellular" evidence="5">
    <location>
        <begin position="598"/>
        <end position="599"/>
    </location>
</feature>
<feature type="transmembrane region" description="Helical; Name=S4 of repeat II" evidence="2">
    <location>
        <begin position="600"/>
        <end position="617"/>
    </location>
</feature>
<feature type="topological domain" description="Cytoplasmic" evidence="5">
    <location>
        <begin position="618"/>
        <end position="633"/>
    </location>
</feature>
<feature type="transmembrane region" description="Helical; Name=S5 of repeat II" evidence="2">
    <location>
        <begin position="634"/>
        <end position="652"/>
    </location>
</feature>
<feature type="topological domain" description="Extracellular" evidence="5">
    <location>
        <begin position="653"/>
        <end position="681"/>
    </location>
</feature>
<feature type="intramembrane region" description="Pore-forming" evidence="2">
    <location>
        <begin position="682"/>
        <end position="702"/>
    </location>
</feature>
<feature type="topological domain" description="Extracellular" evidence="5">
    <location>
        <begin position="703"/>
        <end position="713"/>
    </location>
</feature>
<feature type="transmembrane region" description="Helical; Name=S6 of repeat II" evidence="2">
    <location>
        <begin position="714"/>
        <end position="732"/>
    </location>
</feature>
<feature type="topological domain" description="Cytoplasmic" evidence="5">
    <location>
        <begin position="733"/>
        <end position="919"/>
    </location>
</feature>
<feature type="transmembrane region" description="Helical; Name=S1 of repeat III" evidence="2">
    <location>
        <begin position="920"/>
        <end position="937"/>
    </location>
</feature>
<feature type="topological domain" description="Extracellular" evidence="5">
    <location>
        <begin position="938"/>
        <end position="950"/>
    </location>
</feature>
<feature type="transmembrane region" description="Helical; Name=S2 of repeat III" evidence="2">
    <location>
        <begin position="951"/>
        <end position="969"/>
    </location>
</feature>
<feature type="topological domain" description="Cytoplasmic" evidence="5">
    <location>
        <begin position="970"/>
        <end position="983"/>
    </location>
</feature>
<feature type="transmembrane region" description="Helical; Name=S3 of repeat III" evidence="2">
    <location>
        <begin position="984"/>
        <end position="1002"/>
    </location>
</feature>
<feature type="topological domain" description="Extracellular" evidence="5">
    <location>
        <begin position="1003"/>
        <end position="1010"/>
    </location>
</feature>
<feature type="transmembrane region" description="Helical; Name=S4 of repeat III" evidence="2">
    <location>
        <begin position="1011"/>
        <end position="1029"/>
    </location>
</feature>
<feature type="topological domain" description="Cytoplasmic" evidence="5">
    <location>
        <begin position="1030"/>
        <end position="1046"/>
    </location>
</feature>
<feature type="transmembrane region" description="Helical; Name=S5 of repeat III" evidence="2">
    <location>
        <begin position="1047"/>
        <end position="1066"/>
    </location>
</feature>
<feature type="topological domain" description="Extracellular" evidence="5">
    <location>
        <begin position="1067"/>
        <end position="1119"/>
    </location>
</feature>
<feature type="intramembrane region" description="Pore-forming" evidence="2">
    <location>
        <begin position="1120"/>
        <end position="1141"/>
    </location>
</feature>
<feature type="topological domain" description="Extracellular" evidence="5">
    <location>
        <begin position="1142"/>
        <end position="1158"/>
    </location>
</feature>
<feature type="transmembrane region" description="Helical; Name=S6 of repeat III" evidence="2">
    <location>
        <begin position="1159"/>
        <end position="1180"/>
    </location>
</feature>
<feature type="topological domain" description="Cytoplasmic" evidence="5">
    <location>
        <begin position="1181"/>
        <end position="1243"/>
    </location>
</feature>
<feature type="transmembrane region" description="Helical; Name=S1 of repeat IV" evidence="2">
    <location>
        <begin position="1244"/>
        <end position="1261"/>
    </location>
</feature>
<feature type="topological domain" description="Extracellular" evidence="5">
    <location>
        <begin position="1262"/>
        <end position="1272"/>
    </location>
</feature>
<feature type="transmembrane region" description="Helical; Name=S2 of repeat IV" evidence="2">
    <location>
        <begin position="1273"/>
        <end position="1291"/>
    </location>
</feature>
<feature type="topological domain" description="Cytoplasmic" evidence="5">
    <location>
        <begin position="1292"/>
        <end position="1303"/>
    </location>
</feature>
<feature type="transmembrane region" description="Helical; Name=S3 of repeat IV" evidence="2">
    <location>
        <begin position="1304"/>
        <end position="1321"/>
    </location>
</feature>
<feature type="topological domain" description="Extracellular" evidence="5">
    <location>
        <begin position="1322"/>
        <end position="1334"/>
    </location>
</feature>
<feature type="transmembrane region" description="Helical; Name=S4 of repeat IV" evidence="2">
    <location>
        <begin position="1335"/>
        <end position="1351"/>
    </location>
</feature>
<feature type="topological domain" description="Cytoplasmic" evidence="5">
    <location>
        <begin position="1352"/>
        <end position="1370"/>
    </location>
</feature>
<feature type="transmembrane region" description="Helical; Name=S5 of repeat IV" evidence="2">
    <location>
        <begin position="1371"/>
        <end position="1388"/>
    </location>
</feature>
<feature type="topological domain" description="Extracellular" evidence="5">
    <location>
        <begin position="1389"/>
        <end position="1410"/>
    </location>
</feature>
<feature type="intramembrane region" description="Pore-forming" evidence="2">
    <location>
        <begin position="1411"/>
        <end position="1433"/>
    </location>
</feature>
<feature type="topological domain" description="Extracellular" evidence="5">
    <location>
        <begin position="1434"/>
        <end position="1462"/>
    </location>
</feature>
<feature type="transmembrane region" description="Helical; Name=S6 of repeat IV" evidence="2">
    <location>
        <begin position="1463"/>
        <end position="1485"/>
    </location>
</feature>
<feature type="topological domain" description="Cytoplasmic" evidence="5">
    <location>
        <begin position="1486"/>
        <end position="1719"/>
    </location>
</feature>
<feature type="repeat" description="I" evidence="5">
    <location>
        <begin position="108"/>
        <end position="431"/>
    </location>
</feature>
<feature type="repeat" description="II" evidence="5">
    <location>
        <begin position="495"/>
        <end position="766"/>
    </location>
</feature>
<feature type="repeat" description="III" evidence="5">
    <location>
        <begin position="900"/>
        <end position="1215"/>
    </location>
</feature>
<feature type="repeat" description="IV" evidence="5">
    <location>
        <begin position="1224"/>
        <end position="1521"/>
    </location>
</feature>
<feature type="domain" description="IQ">
    <location>
        <begin position="1615"/>
        <end position="1644"/>
    </location>
</feature>
<feature type="region of interest" description="Disordered" evidence="4">
    <location>
        <begin position="28"/>
        <end position="50"/>
    </location>
</feature>
<feature type="region of interest" description="Disordered" evidence="4">
    <location>
        <begin position="834"/>
        <end position="862"/>
    </location>
</feature>
<feature type="region of interest" description="Important for rapid channel inactivation" evidence="1">
    <location>
        <begin position="1199"/>
        <end position="1201"/>
    </location>
</feature>
<feature type="compositionally biased region" description="Acidic residues" evidence="4">
    <location>
        <begin position="834"/>
        <end position="845"/>
    </location>
</feature>
<feature type="glycosylation site" description="N-linked (GlcNAc...) asparagine" evidence="3">
    <location>
        <position position="209"/>
    </location>
</feature>
<feature type="glycosylation site" description="N-linked (GlcNAc...) asparagine" evidence="3">
    <location>
        <position position="285"/>
    </location>
</feature>
<feature type="glycosylation site" description="N-linked (GlcNAc...) asparagine" evidence="3">
    <location>
        <position position="339"/>
    </location>
</feature>
<feature type="glycosylation site" description="N-linked (GlcNAc...) asparagine" evidence="3">
    <location>
        <position position="1078"/>
    </location>
</feature>
<feature type="glycosylation site" description="N-linked (GlcNAc...) asparagine" evidence="3">
    <location>
        <position position="1092"/>
    </location>
</feature>
<feature type="disulfide bond" evidence="2">
    <location>
        <begin position="275"/>
        <end position="337"/>
    </location>
</feature>
<feature type="disulfide bond" evidence="2">
    <location>
        <begin position="346"/>
        <end position="352"/>
    </location>
</feature>
<feature type="disulfide bond" evidence="2">
    <location>
        <begin position="666"/>
        <end position="672"/>
    </location>
</feature>
<feature type="disulfide bond" evidence="2">
    <location>
        <begin position="704"/>
        <end position="713"/>
    </location>
</feature>
<feature type="disulfide bond" evidence="2">
    <location>
        <begin position="1076"/>
        <end position="1096"/>
    </location>
</feature>
<feature type="disulfide bond" evidence="2">
    <location>
        <begin position="1441"/>
        <end position="1456"/>
    </location>
</feature>
<organism>
    <name type="scientific">Takifugu rubripes</name>
    <name type="common">Japanese pufferfish</name>
    <name type="synonym">Fugu rubripes</name>
    <dbReference type="NCBI Taxonomy" id="31033"/>
    <lineage>
        <taxon>Eukaryota</taxon>
        <taxon>Metazoa</taxon>
        <taxon>Chordata</taxon>
        <taxon>Craniata</taxon>
        <taxon>Vertebrata</taxon>
        <taxon>Euteleostomi</taxon>
        <taxon>Actinopterygii</taxon>
        <taxon>Neopterygii</taxon>
        <taxon>Teleostei</taxon>
        <taxon>Neoteleostei</taxon>
        <taxon>Acanthomorphata</taxon>
        <taxon>Eupercaria</taxon>
        <taxon>Tetraodontiformes</taxon>
        <taxon>Tetradontoidea</taxon>
        <taxon>Tetraodontidae</taxon>
        <taxon>Takifugu</taxon>
    </lineage>
</organism>
<comment type="function">
    <text evidence="2">Pore-forming subunit of a voltage-gated sodium (Nav) channel that directly mediates the depolarizing phase of action potentials in excitable membranes. Navs, also called VGSCs (voltage-gated sodium channels) or VDSCs (voltage-dependent sodium channels), operate by switching between closed and open conformations depending on the voltage difference across the membrane. In the open conformation they allow Na(+) ions to selectively pass through the pore, along their electrochemical gradient. The influx of Na+ ions provokes membrane depolarization, initiating the propagation of electrical signals throughout cells and tissues.</text>
</comment>
<comment type="catalytic activity">
    <reaction evidence="2">
        <text>Na(+)(in) = Na(+)(out)</text>
        <dbReference type="Rhea" id="RHEA:34963"/>
        <dbReference type="ChEBI" id="CHEBI:29101"/>
    </reaction>
</comment>
<comment type="subunit">
    <text evidence="2">Voltage-gated sodium (Nav) channels consist of an ion-conducting alpha subunit which is functional on its own associated with regulatory beta subunits.</text>
</comment>
<comment type="subcellular location">
    <subcellularLocation>
        <location evidence="1">Cell membrane</location>
        <topology evidence="2">Multi-pass membrane protein</topology>
    </subcellularLocation>
</comment>
<comment type="domain">
    <text evidence="2">The sequence contains 4 internal repeats, each with 5 hydrophobic segments (S1, S2, S3, S5, S6) and one positively charged segment (S4). Segments S4 are probably the voltage-sensors and are characterized by a series of positively charged amino acids at every third position.</text>
</comment>
<comment type="similarity">
    <text evidence="5">Belongs to the sodium channel (TC 1.A.1.10) family. Nav1.4/SCN4A subfamily.</text>
</comment>
<evidence type="ECO:0000250" key="1">
    <source>
        <dbReference type="UniProtKB" id="P15390"/>
    </source>
</evidence>
<evidence type="ECO:0000250" key="2">
    <source>
        <dbReference type="UniProtKB" id="P35499"/>
    </source>
</evidence>
<evidence type="ECO:0000255" key="3"/>
<evidence type="ECO:0000256" key="4">
    <source>
        <dbReference type="SAM" id="MobiDB-lite"/>
    </source>
</evidence>
<evidence type="ECO:0000305" key="5"/>
<name>SC4AB_TAKRU</name>
<keyword id="KW-1003">Cell membrane</keyword>
<keyword id="KW-1015">Disulfide bond</keyword>
<keyword id="KW-0325">Glycoprotein</keyword>
<keyword id="KW-0407">Ion channel</keyword>
<keyword id="KW-0406">Ion transport</keyword>
<keyword id="KW-0472">Membrane</keyword>
<keyword id="KW-1185">Reference proteome</keyword>
<keyword id="KW-0677">Repeat</keyword>
<keyword id="KW-0915">Sodium</keyword>
<keyword id="KW-0894">Sodium channel</keyword>
<keyword id="KW-0739">Sodium transport</keyword>
<keyword id="KW-0812">Transmembrane</keyword>
<keyword id="KW-1133">Transmembrane helix</keyword>
<keyword id="KW-0813">Transport</keyword>
<keyword id="KW-0851">Voltage-gated channel</keyword>
<proteinExistence type="inferred from homology"/>
<protein>
    <recommendedName>
        <fullName>Sodium channel protein type 4 subunit alpha B</fullName>
    </recommendedName>
    <alternativeName>
        <fullName>Voltage-gated sodium channel subunit alpha Nav1.4b</fullName>
    </alternativeName>
</protein>
<gene>
    <name type="primary">scn4ab</name>
    <name type="synonym">nav1.4b</name>
</gene>